<feature type="signal peptide" evidence="2">
    <location>
        <begin position="1" status="less than"/>
        <end position="17"/>
    </location>
</feature>
<feature type="propeptide" id="PRO_0000392148" evidence="1">
    <location>
        <begin position="18"/>
        <end position="42"/>
    </location>
</feature>
<feature type="peptide" id="PRO_0000392149" description="Conotoxin LvVIIB">
    <location>
        <begin position="43"/>
        <end position="71"/>
    </location>
</feature>
<feature type="disulfide bond" evidence="1">
    <location>
        <begin position="43"/>
        <end position="57"/>
    </location>
</feature>
<feature type="disulfide bond" evidence="1">
    <location>
        <begin position="50"/>
        <end position="62"/>
    </location>
</feature>
<feature type="disulfide bond" evidence="1">
    <location>
        <begin position="56"/>
        <end position="69"/>
    </location>
</feature>
<feature type="sequence conflict" description="In Ref. 1 and 2; AAD48157." evidence="3" ref="1 2">
    <original>A</original>
    <variation>T</variation>
    <location>
        <position position="10"/>
    </location>
</feature>
<feature type="sequence conflict" description="In Ref. 1 and 2; AAD48157." evidence="3" ref="1 2">
    <original>E</original>
    <variation>K</variation>
    <location>
        <position position="23"/>
    </location>
</feature>
<feature type="sequence conflict" description="In Ref. 1 and 2; AAD48157." evidence="3" ref="1 2">
    <original>V</original>
    <variation>A</variation>
    <location>
        <position position="49"/>
    </location>
</feature>
<feature type="non-terminal residue">
    <location>
        <position position="1"/>
    </location>
</feature>
<name>O17B_CONLI</name>
<proteinExistence type="evidence at transcript level"/>
<evidence type="ECO:0000250" key="1"/>
<evidence type="ECO:0000255" key="2"/>
<evidence type="ECO:0000305" key="3"/>
<sequence length="71" mass="7945">VLIIAVLFLAASELVTADYTRDEWQYRAASLRDAMRNFRDTRCSPGGEVCTRHSPCCTGFLCNHIGGMCHH</sequence>
<protein>
    <recommendedName>
        <fullName>Conotoxin LvVIIB</fullName>
    </recommendedName>
</protein>
<accession>Q9UAB2</accession>
<accession>Q9UAB3</accession>
<keyword id="KW-1015">Disulfide bond</keyword>
<keyword id="KW-0960">Knottin</keyword>
<keyword id="KW-0964">Secreted</keyword>
<keyword id="KW-0732">Signal</keyword>
<keyword id="KW-0800">Toxin</keyword>
<organism>
    <name type="scientific">Conus lividus</name>
    <name type="common">Livid cone</name>
    <dbReference type="NCBI Taxonomy" id="89426"/>
    <lineage>
        <taxon>Eukaryota</taxon>
        <taxon>Metazoa</taxon>
        <taxon>Spiralia</taxon>
        <taxon>Lophotrochozoa</taxon>
        <taxon>Mollusca</taxon>
        <taxon>Gastropoda</taxon>
        <taxon>Caenogastropoda</taxon>
        <taxon>Neogastropoda</taxon>
        <taxon>Conoidea</taxon>
        <taxon>Conidae</taxon>
        <taxon>Conus</taxon>
        <taxon>Lividoconus</taxon>
    </lineage>
</organism>
<dbReference type="EMBL" id="AF089901">
    <property type="protein sequence ID" value="AAD48157.1"/>
    <property type="molecule type" value="mRNA"/>
</dbReference>
<dbReference type="EMBL" id="AF089903">
    <property type="protein sequence ID" value="AAD48159.1"/>
    <property type="molecule type" value="mRNA"/>
</dbReference>
<dbReference type="SMR" id="Q9UAB2"/>
<dbReference type="ConoServer" id="879">
    <property type="toxin name" value="LvVIIB precursor 1"/>
</dbReference>
<dbReference type="ConoServer" id="881">
    <property type="toxin name" value="LvVIIB precursor 2"/>
</dbReference>
<dbReference type="GO" id="GO:0005576">
    <property type="term" value="C:extracellular region"/>
    <property type="evidence" value="ECO:0007669"/>
    <property type="project" value="UniProtKB-SubCell"/>
</dbReference>
<dbReference type="GO" id="GO:0008200">
    <property type="term" value="F:ion channel inhibitor activity"/>
    <property type="evidence" value="ECO:0007669"/>
    <property type="project" value="InterPro"/>
</dbReference>
<dbReference type="GO" id="GO:0090729">
    <property type="term" value="F:toxin activity"/>
    <property type="evidence" value="ECO:0007669"/>
    <property type="project" value="UniProtKB-KW"/>
</dbReference>
<dbReference type="InterPro" id="IPR004214">
    <property type="entry name" value="Conotoxin"/>
</dbReference>
<dbReference type="Pfam" id="PF02950">
    <property type="entry name" value="Conotoxin"/>
    <property type="match status" value="1"/>
</dbReference>
<reference key="1">
    <citation type="journal article" date="1999" name="Proc. Natl. Acad. Sci. U.S.A.">
        <title>Molecular genetics of ecological diversification: duplication and rapid evolution of toxin genes of the venomous gastropod Conus.</title>
        <authorList>
            <person name="Duda T.F. Jr."/>
            <person name="Palumbi S.R."/>
        </authorList>
    </citation>
    <scope>NUCLEOTIDE SEQUENCE [MRNA]</scope>
    <source>
        <tissue>Venom duct</tissue>
    </source>
</reference>
<reference key="2">
    <citation type="journal article" date="2004" name="Proc. R. Soc. B">
        <title>Gene expression and feeding ecology: evolution of piscivory in the venomous gastropod genus Conus.</title>
        <authorList>
            <person name="Duda T.F. Jr."/>
            <person name="Palumbi S.R."/>
        </authorList>
    </citation>
    <scope>NUCLEOTIDE SEQUENCE [MRNA]</scope>
    <source>
        <tissue>Venom duct</tissue>
    </source>
</reference>
<comment type="subcellular location">
    <subcellularLocation>
        <location evidence="1">Secreted</location>
    </subcellularLocation>
</comment>
<comment type="tissue specificity">
    <text>Expressed by the venom duct.</text>
</comment>
<comment type="domain">
    <text evidence="1">The presence of a 'disulfide through disulfide knot' structurally defines this protein as a knottin.</text>
</comment>
<comment type="domain">
    <text>The cysteine framework is VI/VII (C-C-CC-C-C).</text>
</comment>
<comment type="similarity">
    <text evidence="3">Belongs to the conotoxin O1 superfamily.</text>
</comment>